<comment type="function">
    <text evidence="1">Catalyzes the hydrolysis of N-succinyl-L,L-diaminopimelic acid (SDAP), forming succinate and LL-2,6-diaminopimelate (DAP), an intermediate involved in the bacterial biosynthesis of lysine and meso-diaminopimelic acid, an essential component of bacterial cell walls.</text>
</comment>
<comment type="catalytic activity">
    <reaction evidence="1">
        <text>N-succinyl-(2S,6S)-2,6-diaminopimelate + H2O = (2S,6S)-2,6-diaminopimelate + succinate</text>
        <dbReference type="Rhea" id="RHEA:22608"/>
        <dbReference type="ChEBI" id="CHEBI:15377"/>
        <dbReference type="ChEBI" id="CHEBI:30031"/>
        <dbReference type="ChEBI" id="CHEBI:57609"/>
        <dbReference type="ChEBI" id="CHEBI:58087"/>
        <dbReference type="EC" id="3.5.1.18"/>
    </reaction>
</comment>
<comment type="cofactor">
    <cofactor evidence="1">
        <name>Zn(2+)</name>
        <dbReference type="ChEBI" id="CHEBI:29105"/>
    </cofactor>
    <cofactor evidence="1">
        <name>Co(2+)</name>
        <dbReference type="ChEBI" id="CHEBI:48828"/>
    </cofactor>
    <text evidence="1">Binds 2 Zn(2+) or Co(2+) ions per subunit.</text>
</comment>
<comment type="pathway">
    <text evidence="1">Amino-acid biosynthesis; L-lysine biosynthesis via DAP pathway; LL-2,6-diaminopimelate from (S)-tetrahydrodipicolinate (succinylase route): step 3/3.</text>
</comment>
<comment type="subunit">
    <text evidence="1">Homodimer.</text>
</comment>
<comment type="similarity">
    <text evidence="1">Belongs to the peptidase M20A family. DapE subfamily.</text>
</comment>
<proteinExistence type="inferred from homology"/>
<dbReference type="EC" id="3.5.1.18" evidence="1"/>
<dbReference type="EMBL" id="CP000873">
    <property type="protein sequence ID" value="ABX64193.1"/>
    <property type="molecule type" value="Genomic_DNA"/>
</dbReference>
<dbReference type="RefSeq" id="WP_004687037.1">
    <property type="nucleotide sequence ID" value="NC_010104.1"/>
</dbReference>
<dbReference type="SMR" id="A9MCV6"/>
<dbReference type="GeneID" id="97534920"/>
<dbReference type="KEGG" id="bcs:BCAN_B1051"/>
<dbReference type="HOGENOM" id="CLU_021802_4_0_5"/>
<dbReference type="PhylomeDB" id="A9MCV6"/>
<dbReference type="UniPathway" id="UPA00034">
    <property type="reaction ID" value="UER00021"/>
</dbReference>
<dbReference type="Proteomes" id="UP000001385">
    <property type="component" value="Chromosome II"/>
</dbReference>
<dbReference type="GO" id="GO:0008777">
    <property type="term" value="F:acetylornithine deacetylase activity"/>
    <property type="evidence" value="ECO:0007669"/>
    <property type="project" value="TreeGrafter"/>
</dbReference>
<dbReference type="GO" id="GO:0050897">
    <property type="term" value="F:cobalt ion binding"/>
    <property type="evidence" value="ECO:0007669"/>
    <property type="project" value="UniProtKB-UniRule"/>
</dbReference>
<dbReference type="GO" id="GO:0009014">
    <property type="term" value="F:succinyl-diaminopimelate desuccinylase activity"/>
    <property type="evidence" value="ECO:0007669"/>
    <property type="project" value="UniProtKB-UniRule"/>
</dbReference>
<dbReference type="GO" id="GO:0008270">
    <property type="term" value="F:zinc ion binding"/>
    <property type="evidence" value="ECO:0007669"/>
    <property type="project" value="UniProtKB-UniRule"/>
</dbReference>
<dbReference type="GO" id="GO:0019877">
    <property type="term" value="P:diaminopimelate biosynthetic process"/>
    <property type="evidence" value="ECO:0007669"/>
    <property type="project" value="UniProtKB-UniRule"/>
</dbReference>
<dbReference type="GO" id="GO:0006526">
    <property type="term" value="P:L-arginine biosynthetic process"/>
    <property type="evidence" value="ECO:0007669"/>
    <property type="project" value="TreeGrafter"/>
</dbReference>
<dbReference type="GO" id="GO:0009089">
    <property type="term" value="P:lysine biosynthetic process via diaminopimelate"/>
    <property type="evidence" value="ECO:0007669"/>
    <property type="project" value="UniProtKB-UniRule"/>
</dbReference>
<dbReference type="CDD" id="cd03891">
    <property type="entry name" value="M20_DapE_proteobac"/>
    <property type="match status" value="1"/>
</dbReference>
<dbReference type="Gene3D" id="3.30.70.360">
    <property type="match status" value="1"/>
</dbReference>
<dbReference type="Gene3D" id="3.40.630.10">
    <property type="entry name" value="Zn peptidases"/>
    <property type="match status" value="2"/>
</dbReference>
<dbReference type="HAMAP" id="MF_01690">
    <property type="entry name" value="DapE"/>
    <property type="match status" value="1"/>
</dbReference>
<dbReference type="InterPro" id="IPR001261">
    <property type="entry name" value="ArgE/DapE_CS"/>
</dbReference>
<dbReference type="InterPro" id="IPR036264">
    <property type="entry name" value="Bact_exopeptidase_dim_dom"/>
</dbReference>
<dbReference type="InterPro" id="IPR005941">
    <property type="entry name" value="DapE_proteobac"/>
</dbReference>
<dbReference type="InterPro" id="IPR002933">
    <property type="entry name" value="Peptidase_M20"/>
</dbReference>
<dbReference type="InterPro" id="IPR011650">
    <property type="entry name" value="Peptidase_M20_dimer"/>
</dbReference>
<dbReference type="InterPro" id="IPR050072">
    <property type="entry name" value="Peptidase_M20A"/>
</dbReference>
<dbReference type="NCBIfam" id="TIGR01246">
    <property type="entry name" value="dapE_proteo"/>
    <property type="match status" value="1"/>
</dbReference>
<dbReference type="NCBIfam" id="NF009557">
    <property type="entry name" value="PRK13009.1"/>
    <property type="match status" value="1"/>
</dbReference>
<dbReference type="PANTHER" id="PTHR43808">
    <property type="entry name" value="ACETYLORNITHINE DEACETYLASE"/>
    <property type="match status" value="1"/>
</dbReference>
<dbReference type="PANTHER" id="PTHR43808:SF31">
    <property type="entry name" value="N-ACETYL-L-CITRULLINE DEACETYLASE"/>
    <property type="match status" value="1"/>
</dbReference>
<dbReference type="Pfam" id="PF07687">
    <property type="entry name" value="M20_dimer"/>
    <property type="match status" value="1"/>
</dbReference>
<dbReference type="Pfam" id="PF01546">
    <property type="entry name" value="Peptidase_M20"/>
    <property type="match status" value="1"/>
</dbReference>
<dbReference type="SUPFAM" id="SSF55031">
    <property type="entry name" value="Bacterial exopeptidase dimerisation domain"/>
    <property type="match status" value="1"/>
</dbReference>
<dbReference type="SUPFAM" id="SSF53187">
    <property type="entry name" value="Zn-dependent exopeptidases"/>
    <property type="match status" value="1"/>
</dbReference>
<dbReference type="PROSITE" id="PS00758">
    <property type="entry name" value="ARGE_DAPE_CPG2_1"/>
    <property type="match status" value="1"/>
</dbReference>
<dbReference type="PROSITE" id="PS00759">
    <property type="entry name" value="ARGE_DAPE_CPG2_2"/>
    <property type="match status" value="1"/>
</dbReference>
<organism>
    <name type="scientific">Brucella canis (strain ATCC 23365 / NCTC 10854 / RM-666)</name>
    <dbReference type="NCBI Taxonomy" id="483179"/>
    <lineage>
        <taxon>Bacteria</taxon>
        <taxon>Pseudomonadati</taxon>
        <taxon>Pseudomonadota</taxon>
        <taxon>Alphaproteobacteria</taxon>
        <taxon>Hyphomicrobiales</taxon>
        <taxon>Brucellaceae</taxon>
        <taxon>Brucella/Ochrobactrum group</taxon>
        <taxon>Brucella</taxon>
    </lineage>
</organism>
<sequence length="395" mass="42809">MTLPVNPADNLAALIRCPSVTPAEGGALTALEKMLKLMGFSANRPVFSDDNTPDIENLYARKSGNGPHLMFAGHTDVVPPGDEKDWKHPPFAAAIEDGVMYGRGAVDMKGGIACFVAAVARHIEKHGNIKGSISFLITGDEEGPAVNGTVKLLEWAKQRGESWDASIVGEPTNPNALGDMIKIGRRGSLSGTITVHGVQGHAAYPHLAENPVRGIVTLVDSLLYPAFDEGTANFQASNLEVTTIDVGNKATNVIPNKATASFNIRFNDTWTAESLQAEIISRLERAARDNRLRQGRETPIKYELTWRERPSHVFLTHDEKLIGTLTASVEAVTGKRPELSTSGGTSDARFIKDYCPVVEFGLTGQTMHMVDERVALADLEGLTQIYERFIADFFG</sequence>
<protein>
    <recommendedName>
        <fullName evidence="1">Succinyl-diaminopimelate desuccinylase</fullName>
        <shortName evidence="1">SDAP desuccinylase</shortName>
        <ecNumber evidence="1">3.5.1.18</ecNumber>
    </recommendedName>
    <alternativeName>
        <fullName evidence="1">N-succinyl-LL-2,6-diaminoheptanedioate amidohydrolase</fullName>
    </alternativeName>
</protein>
<evidence type="ECO:0000255" key="1">
    <source>
        <dbReference type="HAMAP-Rule" id="MF_01690"/>
    </source>
</evidence>
<reference key="1">
    <citation type="submission" date="2007-10" db="EMBL/GenBank/DDBJ databases">
        <title>Brucella canis ATCC 23365 whole genome shotgun sequencing project.</title>
        <authorList>
            <person name="Setubal J.C."/>
            <person name="Bowns C."/>
            <person name="Boyle S."/>
            <person name="Crasta O.R."/>
            <person name="Czar M.J."/>
            <person name="Dharmanolla C."/>
            <person name="Gillespie J.J."/>
            <person name="Kenyon R.W."/>
            <person name="Lu J."/>
            <person name="Mane S."/>
            <person name="Mohapatra S."/>
            <person name="Nagrani S."/>
            <person name="Purkayastha A."/>
            <person name="Rajasimha H.K."/>
            <person name="Shallom J.M."/>
            <person name="Shallom S."/>
            <person name="Shukla M."/>
            <person name="Snyder E.E."/>
            <person name="Sobral B.W."/>
            <person name="Wattam A.R."/>
            <person name="Will R."/>
            <person name="Williams K."/>
            <person name="Yoo H."/>
            <person name="Bruce D."/>
            <person name="Detter C."/>
            <person name="Munk C."/>
            <person name="Brettin T.S."/>
        </authorList>
    </citation>
    <scope>NUCLEOTIDE SEQUENCE [LARGE SCALE GENOMIC DNA]</scope>
    <source>
        <strain>ATCC 23365 / NCTC 10854 / RM-666</strain>
    </source>
</reference>
<accession>A9MCV6</accession>
<keyword id="KW-0028">Amino-acid biosynthesis</keyword>
<keyword id="KW-0170">Cobalt</keyword>
<keyword id="KW-0220">Diaminopimelate biosynthesis</keyword>
<keyword id="KW-0378">Hydrolase</keyword>
<keyword id="KW-0457">Lysine biosynthesis</keyword>
<keyword id="KW-0479">Metal-binding</keyword>
<keyword id="KW-1185">Reference proteome</keyword>
<keyword id="KW-0862">Zinc</keyword>
<gene>
    <name evidence="1" type="primary">dapE</name>
    <name type="ordered locus">BCAN_B1051</name>
</gene>
<feature type="chain" id="PRO_0000375487" description="Succinyl-diaminopimelate desuccinylase">
    <location>
        <begin position="1"/>
        <end position="395"/>
    </location>
</feature>
<feature type="active site" evidence="1">
    <location>
        <position position="76"/>
    </location>
</feature>
<feature type="active site" description="Proton acceptor" evidence="1">
    <location>
        <position position="141"/>
    </location>
</feature>
<feature type="binding site" evidence="1">
    <location>
        <position position="74"/>
    </location>
    <ligand>
        <name>Zn(2+)</name>
        <dbReference type="ChEBI" id="CHEBI:29105"/>
        <label>1</label>
    </ligand>
</feature>
<feature type="binding site" evidence="1">
    <location>
        <position position="107"/>
    </location>
    <ligand>
        <name>Zn(2+)</name>
        <dbReference type="ChEBI" id="CHEBI:29105"/>
        <label>1</label>
    </ligand>
</feature>
<feature type="binding site" evidence="1">
    <location>
        <position position="107"/>
    </location>
    <ligand>
        <name>Zn(2+)</name>
        <dbReference type="ChEBI" id="CHEBI:29105"/>
        <label>2</label>
    </ligand>
</feature>
<feature type="binding site" evidence="1">
    <location>
        <position position="142"/>
    </location>
    <ligand>
        <name>Zn(2+)</name>
        <dbReference type="ChEBI" id="CHEBI:29105"/>
        <label>2</label>
    </ligand>
</feature>
<feature type="binding site" evidence="1">
    <location>
        <position position="170"/>
    </location>
    <ligand>
        <name>Zn(2+)</name>
        <dbReference type="ChEBI" id="CHEBI:29105"/>
        <label>1</label>
    </ligand>
</feature>
<feature type="binding site" evidence="1">
    <location>
        <position position="368"/>
    </location>
    <ligand>
        <name>Zn(2+)</name>
        <dbReference type="ChEBI" id="CHEBI:29105"/>
        <label>2</label>
    </ligand>
</feature>
<name>DAPE_BRUC2</name>